<feature type="chain" id="PRO_1000071931" description="Pyridoxine 5'-phosphate synthase">
    <location>
        <begin position="1"/>
        <end position="257"/>
    </location>
</feature>
<feature type="active site" description="Proton acceptor" evidence="1">
    <location>
        <position position="41"/>
    </location>
</feature>
<feature type="active site" description="Proton acceptor" evidence="1">
    <location>
        <position position="68"/>
    </location>
</feature>
<feature type="active site" description="Proton donor" evidence="1">
    <location>
        <position position="210"/>
    </location>
</feature>
<feature type="binding site" evidence="1">
    <location>
        <position position="6"/>
    </location>
    <ligand>
        <name>3-amino-2-oxopropyl phosphate</name>
        <dbReference type="ChEBI" id="CHEBI:57279"/>
    </ligand>
</feature>
<feature type="binding site" evidence="1">
    <location>
        <begin position="8"/>
        <end position="9"/>
    </location>
    <ligand>
        <name>1-deoxy-D-xylulose 5-phosphate</name>
        <dbReference type="ChEBI" id="CHEBI:57792"/>
    </ligand>
</feature>
<feature type="binding site" evidence="1">
    <location>
        <position position="17"/>
    </location>
    <ligand>
        <name>3-amino-2-oxopropyl phosphate</name>
        <dbReference type="ChEBI" id="CHEBI:57279"/>
    </ligand>
</feature>
<feature type="binding site" evidence="1">
    <location>
        <position position="43"/>
    </location>
    <ligand>
        <name>1-deoxy-D-xylulose 5-phosphate</name>
        <dbReference type="ChEBI" id="CHEBI:57792"/>
    </ligand>
</feature>
<feature type="binding site" evidence="1">
    <location>
        <position position="48"/>
    </location>
    <ligand>
        <name>1-deoxy-D-xylulose 5-phosphate</name>
        <dbReference type="ChEBI" id="CHEBI:57792"/>
    </ligand>
</feature>
<feature type="binding site" evidence="1">
    <location>
        <position position="98"/>
    </location>
    <ligand>
        <name>1-deoxy-D-xylulose 5-phosphate</name>
        <dbReference type="ChEBI" id="CHEBI:57792"/>
    </ligand>
</feature>
<feature type="binding site" evidence="1">
    <location>
        <position position="211"/>
    </location>
    <ligand>
        <name>3-amino-2-oxopropyl phosphate</name>
        <dbReference type="ChEBI" id="CHEBI:57279"/>
    </ligand>
</feature>
<feature type="binding site" evidence="1">
    <location>
        <begin position="232"/>
        <end position="233"/>
    </location>
    <ligand>
        <name>3-amino-2-oxopropyl phosphate</name>
        <dbReference type="ChEBI" id="CHEBI:57279"/>
    </ligand>
</feature>
<feature type="site" description="Transition state stabilizer" evidence="1">
    <location>
        <position position="147"/>
    </location>
</feature>
<protein>
    <recommendedName>
        <fullName evidence="1">Pyridoxine 5'-phosphate synthase</fullName>
        <shortName evidence="1">PNP synthase</shortName>
        <ecNumber evidence="1">2.6.99.2</ecNumber>
    </recommendedName>
</protein>
<comment type="function">
    <text evidence="1">Catalyzes the complicated ring closure reaction between the two acyclic compounds 1-deoxy-D-xylulose-5-phosphate (DXP) and 3-amino-2-oxopropyl phosphate (1-amino-acetone-3-phosphate or AAP) to form pyridoxine 5'-phosphate (PNP) and inorganic phosphate.</text>
</comment>
<comment type="catalytic activity">
    <reaction evidence="1">
        <text>3-amino-2-oxopropyl phosphate + 1-deoxy-D-xylulose 5-phosphate = pyridoxine 5'-phosphate + phosphate + 2 H2O + H(+)</text>
        <dbReference type="Rhea" id="RHEA:15265"/>
        <dbReference type="ChEBI" id="CHEBI:15377"/>
        <dbReference type="ChEBI" id="CHEBI:15378"/>
        <dbReference type="ChEBI" id="CHEBI:43474"/>
        <dbReference type="ChEBI" id="CHEBI:57279"/>
        <dbReference type="ChEBI" id="CHEBI:57792"/>
        <dbReference type="ChEBI" id="CHEBI:58589"/>
        <dbReference type="EC" id="2.6.99.2"/>
    </reaction>
</comment>
<comment type="pathway">
    <text evidence="1">Cofactor biosynthesis; pyridoxine 5'-phosphate biosynthesis; pyridoxine 5'-phosphate from D-erythrose 4-phosphate: step 5/5.</text>
</comment>
<comment type="subunit">
    <text evidence="1">Homooctamer; tetramer of dimers.</text>
</comment>
<comment type="subcellular location">
    <subcellularLocation>
        <location evidence="1">Cytoplasm</location>
    </subcellularLocation>
</comment>
<comment type="similarity">
    <text evidence="1">Belongs to the PNP synthase family.</text>
</comment>
<accession>A8FMU3</accession>
<organism>
    <name type="scientific">Campylobacter jejuni subsp. jejuni serotype O:6 (strain 81116 / NCTC 11828)</name>
    <dbReference type="NCBI Taxonomy" id="407148"/>
    <lineage>
        <taxon>Bacteria</taxon>
        <taxon>Pseudomonadati</taxon>
        <taxon>Campylobacterota</taxon>
        <taxon>Epsilonproteobacteria</taxon>
        <taxon>Campylobacterales</taxon>
        <taxon>Campylobacteraceae</taxon>
        <taxon>Campylobacter</taxon>
    </lineage>
</organism>
<reference key="1">
    <citation type="journal article" date="2007" name="J. Bacteriol.">
        <title>The complete genome sequence of Campylobacter jejuni strain 81116 (NCTC11828).</title>
        <authorList>
            <person name="Pearson B.M."/>
            <person name="Gaskin D.J.H."/>
            <person name="Segers R.P.A.M."/>
            <person name="Wells J.M."/>
            <person name="Nuijten P.J.M."/>
            <person name="van Vliet A.H.M."/>
        </authorList>
    </citation>
    <scope>NUCLEOTIDE SEQUENCE [LARGE SCALE GENOMIC DNA]</scope>
    <source>
        <strain>81116 / NCTC 11828</strain>
    </source>
</reference>
<proteinExistence type="inferred from homology"/>
<dbReference type="EC" id="2.6.99.2" evidence="1"/>
<dbReference type="EMBL" id="CP000814">
    <property type="protein sequence ID" value="ABV52780.1"/>
    <property type="molecule type" value="Genomic_DNA"/>
</dbReference>
<dbReference type="RefSeq" id="WP_002866232.1">
    <property type="nucleotide sequence ID" value="NC_009839.1"/>
</dbReference>
<dbReference type="SMR" id="A8FMU3"/>
<dbReference type="KEGG" id="cju:C8J_1181"/>
<dbReference type="HOGENOM" id="CLU_074563_0_0_7"/>
<dbReference type="UniPathway" id="UPA00244">
    <property type="reaction ID" value="UER00313"/>
</dbReference>
<dbReference type="GO" id="GO:0005829">
    <property type="term" value="C:cytosol"/>
    <property type="evidence" value="ECO:0007669"/>
    <property type="project" value="TreeGrafter"/>
</dbReference>
<dbReference type="GO" id="GO:0033856">
    <property type="term" value="F:pyridoxine 5'-phosphate synthase activity"/>
    <property type="evidence" value="ECO:0007669"/>
    <property type="project" value="UniProtKB-EC"/>
</dbReference>
<dbReference type="GO" id="GO:0008615">
    <property type="term" value="P:pyridoxine biosynthetic process"/>
    <property type="evidence" value="ECO:0007669"/>
    <property type="project" value="UniProtKB-UniRule"/>
</dbReference>
<dbReference type="CDD" id="cd00003">
    <property type="entry name" value="PNPsynthase"/>
    <property type="match status" value="1"/>
</dbReference>
<dbReference type="Gene3D" id="3.20.20.70">
    <property type="entry name" value="Aldolase class I"/>
    <property type="match status" value="1"/>
</dbReference>
<dbReference type="HAMAP" id="MF_00279">
    <property type="entry name" value="PdxJ"/>
    <property type="match status" value="1"/>
</dbReference>
<dbReference type="InterPro" id="IPR013785">
    <property type="entry name" value="Aldolase_TIM"/>
</dbReference>
<dbReference type="InterPro" id="IPR004569">
    <property type="entry name" value="PyrdxlP_synth_PdxJ"/>
</dbReference>
<dbReference type="InterPro" id="IPR036130">
    <property type="entry name" value="Pyridoxine-5'_phos_synth"/>
</dbReference>
<dbReference type="NCBIfam" id="TIGR00559">
    <property type="entry name" value="pdxJ"/>
    <property type="match status" value="1"/>
</dbReference>
<dbReference type="NCBIfam" id="NF003625">
    <property type="entry name" value="PRK05265.1-3"/>
    <property type="match status" value="1"/>
</dbReference>
<dbReference type="NCBIfam" id="NF003627">
    <property type="entry name" value="PRK05265.1-5"/>
    <property type="match status" value="1"/>
</dbReference>
<dbReference type="PANTHER" id="PTHR30456">
    <property type="entry name" value="PYRIDOXINE 5'-PHOSPHATE SYNTHASE"/>
    <property type="match status" value="1"/>
</dbReference>
<dbReference type="PANTHER" id="PTHR30456:SF0">
    <property type="entry name" value="PYRIDOXINE 5'-PHOSPHATE SYNTHASE"/>
    <property type="match status" value="1"/>
</dbReference>
<dbReference type="Pfam" id="PF03740">
    <property type="entry name" value="PdxJ"/>
    <property type="match status" value="1"/>
</dbReference>
<dbReference type="SUPFAM" id="SSF63892">
    <property type="entry name" value="Pyridoxine 5'-phosphate synthase"/>
    <property type="match status" value="1"/>
</dbReference>
<keyword id="KW-0963">Cytoplasm</keyword>
<keyword id="KW-0664">Pyridoxine biosynthesis</keyword>
<keyword id="KW-0808">Transferase</keyword>
<evidence type="ECO:0000255" key="1">
    <source>
        <dbReference type="HAMAP-Rule" id="MF_00279"/>
    </source>
</evidence>
<sequence>MLLGVNIDHIAVLRQARMVNDPDLLEAAFIAAKHGDQITLHVREDRRHAQDFDLENIIKFCKSPINLECALNDEILNLALKLKPHRVTLVPEKREELTTEGGLCLNHTKLKQSIEKLQNANIEVSLFINPSLEDIEKSKNLKAQFIELHTGHYANLHNALFSNISHTAFALKELGQDKKNLQAQFEKELQNLELCAKKGTELGLKVAAGHGLNYKNVKPVVKIKEICELNIGQSIVARSVFTGLQNAILEMKELIKR</sequence>
<name>PDXJ_CAMJ8</name>
<gene>
    <name evidence="1" type="primary">pdxJ</name>
    <name type="ordered locus">C8J_1181</name>
</gene>